<proteinExistence type="inferred from homology"/>
<organism>
    <name type="scientific">Salmonella paratyphi A (strain AKU_12601)</name>
    <dbReference type="NCBI Taxonomy" id="554290"/>
    <lineage>
        <taxon>Bacteria</taxon>
        <taxon>Pseudomonadati</taxon>
        <taxon>Pseudomonadota</taxon>
        <taxon>Gammaproteobacteria</taxon>
        <taxon>Enterobacterales</taxon>
        <taxon>Enterobacteriaceae</taxon>
        <taxon>Salmonella</taxon>
    </lineage>
</organism>
<protein>
    <recommendedName>
        <fullName evidence="1">Protein SprT</fullName>
    </recommendedName>
</protein>
<evidence type="ECO:0000255" key="1">
    <source>
        <dbReference type="HAMAP-Rule" id="MF_00746"/>
    </source>
</evidence>
<sequence length="165" mass="19273">MKTPRLPIAIQQAVMRRLRENLAQANLKLDRHYPEPKLVYTQRGTSAGTAWLESYEIRLNPVLLLENIDTFIAEVVPHELTHLLVWKHFGRKAPHGKEWKWMMESVLGVPARRTHQFALQSVRRNTFPYHCQCQQHQLTVRRHNRVVRGEAVYRCVHCGEPLVAG</sequence>
<reference key="1">
    <citation type="journal article" date="2009" name="BMC Genomics">
        <title>Pseudogene accumulation in the evolutionary histories of Salmonella enterica serovars Paratyphi A and Typhi.</title>
        <authorList>
            <person name="Holt K.E."/>
            <person name="Thomson N.R."/>
            <person name="Wain J."/>
            <person name="Langridge G.C."/>
            <person name="Hasan R."/>
            <person name="Bhutta Z.A."/>
            <person name="Quail M.A."/>
            <person name="Norbertczak H."/>
            <person name="Walker D."/>
            <person name="Simmonds M."/>
            <person name="White B."/>
            <person name="Bason N."/>
            <person name="Mungall K."/>
            <person name="Dougan G."/>
            <person name="Parkhill J."/>
        </authorList>
    </citation>
    <scope>NUCLEOTIDE SEQUENCE [LARGE SCALE GENOMIC DNA]</scope>
    <source>
        <strain>AKU_12601</strain>
    </source>
</reference>
<comment type="cofactor">
    <cofactor evidence="1">
        <name>Zn(2+)</name>
        <dbReference type="ChEBI" id="CHEBI:29105"/>
    </cofactor>
    <text evidence="1">Binds 1 zinc ion.</text>
</comment>
<comment type="subcellular location">
    <subcellularLocation>
        <location evidence="1">Cytoplasm</location>
    </subcellularLocation>
</comment>
<comment type="similarity">
    <text evidence="1">Belongs to the SprT family.</text>
</comment>
<gene>
    <name evidence="1" type="primary">sprT</name>
    <name type="ordered locus">SSPA2754</name>
</gene>
<keyword id="KW-0963">Cytoplasm</keyword>
<keyword id="KW-0479">Metal-binding</keyword>
<keyword id="KW-0862">Zinc</keyword>
<feature type="chain" id="PRO_1000133254" description="Protein SprT">
    <location>
        <begin position="1"/>
        <end position="165"/>
    </location>
</feature>
<feature type="domain" description="SprT-like" evidence="1">
    <location>
        <begin position="22"/>
        <end position="163"/>
    </location>
</feature>
<feature type="active site" evidence="1">
    <location>
        <position position="79"/>
    </location>
</feature>
<feature type="binding site" evidence="1">
    <location>
        <position position="78"/>
    </location>
    <ligand>
        <name>Zn(2+)</name>
        <dbReference type="ChEBI" id="CHEBI:29105"/>
    </ligand>
</feature>
<feature type="binding site" evidence="1">
    <location>
        <position position="82"/>
    </location>
    <ligand>
        <name>Zn(2+)</name>
        <dbReference type="ChEBI" id="CHEBI:29105"/>
    </ligand>
</feature>
<accession>B5BFP9</accession>
<dbReference type="EMBL" id="FM200053">
    <property type="protein sequence ID" value="CAR60995.1"/>
    <property type="molecule type" value="Genomic_DNA"/>
</dbReference>
<dbReference type="RefSeq" id="WP_000856778.1">
    <property type="nucleotide sequence ID" value="NC_011147.1"/>
</dbReference>
<dbReference type="KEGG" id="sek:SSPA2754"/>
<dbReference type="HOGENOM" id="CLU_113336_0_1_6"/>
<dbReference type="Proteomes" id="UP000001869">
    <property type="component" value="Chromosome"/>
</dbReference>
<dbReference type="GO" id="GO:0005737">
    <property type="term" value="C:cytoplasm"/>
    <property type="evidence" value="ECO:0007669"/>
    <property type="project" value="UniProtKB-SubCell"/>
</dbReference>
<dbReference type="GO" id="GO:0008270">
    <property type="term" value="F:zinc ion binding"/>
    <property type="evidence" value="ECO:0007669"/>
    <property type="project" value="UniProtKB-UniRule"/>
</dbReference>
<dbReference type="GO" id="GO:0006950">
    <property type="term" value="P:response to stress"/>
    <property type="evidence" value="ECO:0007669"/>
    <property type="project" value="UniProtKB-ARBA"/>
</dbReference>
<dbReference type="HAMAP" id="MF_00746">
    <property type="entry name" value="SprT"/>
    <property type="match status" value="1"/>
</dbReference>
<dbReference type="InterPro" id="IPR006640">
    <property type="entry name" value="SprT-like_domain"/>
</dbReference>
<dbReference type="InterPro" id="IPR035240">
    <property type="entry name" value="SprT_Zn_ribbon"/>
</dbReference>
<dbReference type="InterPro" id="IPR023483">
    <property type="entry name" value="Uncharacterised_SprT"/>
</dbReference>
<dbReference type="NCBIfam" id="NF003421">
    <property type="entry name" value="PRK04860.1"/>
    <property type="match status" value="1"/>
</dbReference>
<dbReference type="PANTHER" id="PTHR38773">
    <property type="entry name" value="PROTEIN SPRT"/>
    <property type="match status" value="1"/>
</dbReference>
<dbReference type="PANTHER" id="PTHR38773:SF1">
    <property type="entry name" value="PROTEIN SPRT"/>
    <property type="match status" value="1"/>
</dbReference>
<dbReference type="Pfam" id="PF10263">
    <property type="entry name" value="SprT-like"/>
    <property type="match status" value="1"/>
</dbReference>
<dbReference type="Pfam" id="PF17283">
    <property type="entry name" value="Zn_ribbon_SprT"/>
    <property type="match status" value="1"/>
</dbReference>
<dbReference type="SMART" id="SM00731">
    <property type="entry name" value="SprT"/>
    <property type="match status" value="1"/>
</dbReference>
<dbReference type="PROSITE" id="PS00142">
    <property type="entry name" value="ZINC_PROTEASE"/>
    <property type="match status" value="1"/>
</dbReference>
<name>SPRT_SALPK</name>